<sequence>MEALRRAHEATLRLLLCRPWASGAASRPKPRASEVLTQHLLQRRLPHWTSFCVPYSAVHNDQFGLSHFNWPVLGANYHVLRTGCFPFIKYHCSKAPWQDLAPQDRFFTALKVINLGIPTLLYGLGSWLFARVTETVHTSYGPITIYFLNKEDEGAMY</sequence>
<evidence type="ECO:0000255" key="1"/>
<evidence type="ECO:0000303" key="2">
    <source>
    </source>
</evidence>
<evidence type="ECO:0000303" key="3">
    <source>
    </source>
</evidence>
<evidence type="ECO:0000305" key="4"/>
<feature type="signal peptide" evidence="1">
    <location>
        <begin position="1"/>
        <end position="23"/>
    </location>
</feature>
<feature type="chain" id="PRO_0000332741" description="Uncharacterized protein C15orf61 homolog">
    <location>
        <begin position="24"/>
        <end position="157"/>
    </location>
</feature>
<feature type="splice variant" id="VSP_038577" description="In isoform 2." evidence="2 3">
    <original>IPTLLYGLGSWLFARVTETVHTSYGPITIYFLNKEDEGAMY</original>
    <variation>EWRRPRLTQALLHPRAAAGPQARCSLSRAGPSHPRWAACSTPEVVPCHCPPGRTLPRAARSESRQWLRSCLARVIPALITKSLWRTKNWTDF</variation>
    <location>
        <begin position="117"/>
        <end position="157"/>
    </location>
</feature>
<keyword id="KW-0025">Alternative splicing</keyword>
<keyword id="KW-1185">Reference proteome</keyword>
<keyword id="KW-0964">Secreted</keyword>
<keyword id="KW-0732">Signal</keyword>
<reference key="1">
    <citation type="journal article" date="2005" name="Science">
        <title>The transcriptional landscape of the mammalian genome.</title>
        <authorList>
            <person name="Carninci P."/>
            <person name="Kasukawa T."/>
            <person name="Katayama S."/>
            <person name="Gough J."/>
            <person name="Frith M.C."/>
            <person name="Maeda N."/>
            <person name="Oyama R."/>
            <person name="Ravasi T."/>
            <person name="Lenhard B."/>
            <person name="Wells C."/>
            <person name="Kodzius R."/>
            <person name="Shimokawa K."/>
            <person name="Bajic V.B."/>
            <person name="Brenner S.E."/>
            <person name="Batalov S."/>
            <person name="Forrest A.R."/>
            <person name="Zavolan M."/>
            <person name="Davis M.J."/>
            <person name="Wilming L.G."/>
            <person name="Aidinis V."/>
            <person name="Allen J.E."/>
            <person name="Ambesi-Impiombato A."/>
            <person name="Apweiler R."/>
            <person name="Aturaliya R.N."/>
            <person name="Bailey T.L."/>
            <person name="Bansal M."/>
            <person name="Baxter L."/>
            <person name="Beisel K.W."/>
            <person name="Bersano T."/>
            <person name="Bono H."/>
            <person name="Chalk A.M."/>
            <person name="Chiu K.P."/>
            <person name="Choudhary V."/>
            <person name="Christoffels A."/>
            <person name="Clutterbuck D.R."/>
            <person name="Crowe M.L."/>
            <person name="Dalla E."/>
            <person name="Dalrymple B.P."/>
            <person name="de Bono B."/>
            <person name="Della Gatta G."/>
            <person name="di Bernardo D."/>
            <person name="Down T."/>
            <person name="Engstrom P."/>
            <person name="Fagiolini M."/>
            <person name="Faulkner G."/>
            <person name="Fletcher C.F."/>
            <person name="Fukushima T."/>
            <person name="Furuno M."/>
            <person name="Futaki S."/>
            <person name="Gariboldi M."/>
            <person name="Georgii-Hemming P."/>
            <person name="Gingeras T.R."/>
            <person name="Gojobori T."/>
            <person name="Green R.E."/>
            <person name="Gustincich S."/>
            <person name="Harbers M."/>
            <person name="Hayashi Y."/>
            <person name="Hensch T.K."/>
            <person name="Hirokawa N."/>
            <person name="Hill D."/>
            <person name="Huminiecki L."/>
            <person name="Iacono M."/>
            <person name="Ikeo K."/>
            <person name="Iwama A."/>
            <person name="Ishikawa T."/>
            <person name="Jakt M."/>
            <person name="Kanapin A."/>
            <person name="Katoh M."/>
            <person name="Kawasawa Y."/>
            <person name="Kelso J."/>
            <person name="Kitamura H."/>
            <person name="Kitano H."/>
            <person name="Kollias G."/>
            <person name="Krishnan S.P."/>
            <person name="Kruger A."/>
            <person name="Kummerfeld S.K."/>
            <person name="Kurochkin I.V."/>
            <person name="Lareau L.F."/>
            <person name="Lazarevic D."/>
            <person name="Lipovich L."/>
            <person name="Liu J."/>
            <person name="Liuni S."/>
            <person name="McWilliam S."/>
            <person name="Madan Babu M."/>
            <person name="Madera M."/>
            <person name="Marchionni L."/>
            <person name="Matsuda H."/>
            <person name="Matsuzawa S."/>
            <person name="Miki H."/>
            <person name="Mignone F."/>
            <person name="Miyake S."/>
            <person name="Morris K."/>
            <person name="Mottagui-Tabar S."/>
            <person name="Mulder N."/>
            <person name="Nakano N."/>
            <person name="Nakauchi H."/>
            <person name="Ng P."/>
            <person name="Nilsson R."/>
            <person name="Nishiguchi S."/>
            <person name="Nishikawa S."/>
            <person name="Nori F."/>
            <person name="Ohara O."/>
            <person name="Okazaki Y."/>
            <person name="Orlando V."/>
            <person name="Pang K.C."/>
            <person name="Pavan W.J."/>
            <person name="Pavesi G."/>
            <person name="Pesole G."/>
            <person name="Petrovsky N."/>
            <person name="Piazza S."/>
            <person name="Reed J."/>
            <person name="Reid J.F."/>
            <person name="Ring B.Z."/>
            <person name="Ringwald M."/>
            <person name="Rost B."/>
            <person name="Ruan Y."/>
            <person name="Salzberg S.L."/>
            <person name="Sandelin A."/>
            <person name="Schneider C."/>
            <person name="Schoenbach C."/>
            <person name="Sekiguchi K."/>
            <person name="Semple C.A."/>
            <person name="Seno S."/>
            <person name="Sessa L."/>
            <person name="Sheng Y."/>
            <person name="Shibata Y."/>
            <person name="Shimada H."/>
            <person name="Shimada K."/>
            <person name="Silva D."/>
            <person name="Sinclair B."/>
            <person name="Sperling S."/>
            <person name="Stupka E."/>
            <person name="Sugiura K."/>
            <person name="Sultana R."/>
            <person name="Takenaka Y."/>
            <person name="Taki K."/>
            <person name="Tammoja K."/>
            <person name="Tan S.L."/>
            <person name="Tang S."/>
            <person name="Taylor M.S."/>
            <person name="Tegner J."/>
            <person name="Teichmann S.A."/>
            <person name="Ueda H.R."/>
            <person name="van Nimwegen E."/>
            <person name="Verardo R."/>
            <person name="Wei C.L."/>
            <person name="Yagi K."/>
            <person name="Yamanishi H."/>
            <person name="Zabarovsky E."/>
            <person name="Zhu S."/>
            <person name="Zimmer A."/>
            <person name="Hide W."/>
            <person name="Bult C."/>
            <person name="Grimmond S.M."/>
            <person name="Teasdale R.D."/>
            <person name="Liu E.T."/>
            <person name="Brusic V."/>
            <person name="Quackenbush J."/>
            <person name="Wahlestedt C."/>
            <person name="Mattick J.S."/>
            <person name="Hume D.A."/>
            <person name="Kai C."/>
            <person name="Sasaki D."/>
            <person name="Tomaru Y."/>
            <person name="Fukuda S."/>
            <person name="Kanamori-Katayama M."/>
            <person name="Suzuki M."/>
            <person name="Aoki J."/>
            <person name="Arakawa T."/>
            <person name="Iida J."/>
            <person name="Imamura K."/>
            <person name="Itoh M."/>
            <person name="Kato T."/>
            <person name="Kawaji H."/>
            <person name="Kawagashira N."/>
            <person name="Kawashima T."/>
            <person name="Kojima M."/>
            <person name="Kondo S."/>
            <person name="Konno H."/>
            <person name="Nakano K."/>
            <person name="Ninomiya N."/>
            <person name="Nishio T."/>
            <person name="Okada M."/>
            <person name="Plessy C."/>
            <person name="Shibata K."/>
            <person name="Shiraki T."/>
            <person name="Suzuki S."/>
            <person name="Tagami M."/>
            <person name="Waki K."/>
            <person name="Watahiki A."/>
            <person name="Okamura-Oho Y."/>
            <person name="Suzuki H."/>
            <person name="Kawai J."/>
            <person name="Hayashizaki Y."/>
        </authorList>
    </citation>
    <scope>NUCLEOTIDE SEQUENCE [LARGE SCALE MRNA] (ISOFORM 2)</scope>
    <source>
        <strain>C57BL/6J</strain>
        <tissue>Inner ear</tissue>
    </source>
</reference>
<reference key="2">
    <citation type="submission" date="2005-08" db="EMBL/GenBank/DDBJ databases">
        <authorList>
            <person name="Mural R.J."/>
            <person name="Adams M.D."/>
            <person name="Myers E.W."/>
            <person name="Smith H.O."/>
            <person name="Venter J.C."/>
        </authorList>
    </citation>
    <scope>NUCLEOTIDE SEQUENCE [LARGE SCALE GENOMIC DNA]</scope>
    <scope>ALTERNATIVE SPLICING (ISOFORM 1)</scope>
</reference>
<reference key="3">
    <citation type="journal article" date="2004" name="Genome Res.">
        <title>The status, quality, and expansion of the NIH full-length cDNA project: the Mammalian Gene Collection (MGC).</title>
        <authorList>
            <consortium name="The MGC Project Team"/>
        </authorList>
    </citation>
    <scope>NUCLEOTIDE SEQUENCE [LARGE SCALE MRNA] (ISOFORM 2)</scope>
</reference>
<accession>Q0VG49</accession>
<accession>Q3TYQ8</accession>
<protein>
    <recommendedName>
        <fullName>Uncharacterized protein C15orf61 homolog</fullName>
    </recommendedName>
</protein>
<proteinExistence type="evidence at transcript level"/>
<organism>
    <name type="scientific">Mus musculus</name>
    <name type="common">Mouse</name>
    <dbReference type="NCBI Taxonomy" id="10090"/>
    <lineage>
        <taxon>Eukaryota</taxon>
        <taxon>Metazoa</taxon>
        <taxon>Chordata</taxon>
        <taxon>Craniata</taxon>
        <taxon>Vertebrata</taxon>
        <taxon>Euteleostomi</taxon>
        <taxon>Mammalia</taxon>
        <taxon>Eutheria</taxon>
        <taxon>Euarchontoglires</taxon>
        <taxon>Glires</taxon>
        <taxon>Rodentia</taxon>
        <taxon>Myomorpha</taxon>
        <taxon>Muroidea</taxon>
        <taxon>Muridae</taxon>
        <taxon>Murinae</taxon>
        <taxon>Mus</taxon>
        <taxon>Mus</taxon>
    </lineage>
</organism>
<name>CO061_MOUSE</name>
<dbReference type="EMBL" id="AK158428">
    <property type="protein sequence ID" value="BAE34504.1"/>
    <property type="status" value="ALT_FRAME"/>
    <property type="molecule type" value="mRNA"/>
</dbReference>
<dbReference type="EMBL" id="CH466522">
    <property type="status" value="NOT_ANNOTATED_CDS"/>
    <property type="molecule type" value="Genomic_DNA"/>
</dbReference>
<dbReference type="EMBL" id="BC116242">
    <property type="protein sequence ID" value="AAI16243.1"/>
    <property type="molecule type" value="mRNA"/>
</dbReference>
<dbReference type="EMBL" id="BC116243">
    <property type="protein sequence ID" value="AAI16244.1"/>
    <property type="molecule type" value="mRNA"/>
</dbReference>
<dbReference type="CCDS" id="CCDS52830.1">
    <molecule id="Q0VG49-1"/>
</dbReference>
<dbReference type="RefSeq" id="NP_081366.1">
    <molecule id="Q0VG49-1"/>
    <property type="nucleotide sequence ID" value="NM_027090.1"/>
</dbReference>
<dbReference type="FunCoup" id="Q0VG49">
    <property type="interactions" value="11"/>
</dbReference>
<dbReference type="STRING" id="10090.ENSMUSP00000127596"/>
<dbReference type="PhosphoSitePlus" id="Q0VG49"/>
<dbReference type="PaxDb" id="10090-ENSMUSP00000127596"/>
<dbReference type="PeptideAtlas" id="Q0VG49"/>
<dbReference type="Antibodypedia" id="77230">
    <property type="antibodies" value="4 antibodies from 4 providers"/>
</dbReference>
<dbReference type="Ensembl" id="ENSMUST00000168665.3">
    <molecule id="Q0VG49-1"/>
    <property type="protein sequence ID" value="ENSMUSP00000127596.2"/>
    <property type="gene ID" value="ENSMUSG00000032403.9"/>
</dbReference>
<dbReference type="GeneID" id="69478"/>
<dbReference type="KEGG" id="mmu:69478"/>
<dbReference type="UCSC" id="uc009qba.2">
    <molecule id="Q0VG49-1"/>
    <property type="organism name" value="mouse"/>
</dbReference>
<dbReference type="UCSC" id="uc009qbb.1">
    <molecule id="Q0VG49-2"/>
    <property type="organism name" value="mouse"/>
</dbReference>
<dbReference type="AGR" id="MGI:1916728"/>
<dbReference type="MGI" id="MGI:1916728">
    <property type="gene designation" value="2300009A05Rik"/>
</dbReference>
<dbReference type="VEuPathDB" id="HostDB:ENSMUSG00000032403"/>
<dbReference type="eggNOG" id="ENOG502S166">
    <property type="taxonomic scope" value="Eukaryota"/>
</dbReference>
<dbReference type="GeneTree" id="ENSGT00390000015942"/>
<dbReference type="HOGENOM" id="CLU_129379_0_0_1"/>
<dbReference type="InParanoid" id="Q0VG49"/>
<dbReference type="OMA" id="KYHCTRR"/>
<dbReference type="OrthoDB" id="9970237at2759"/>
<dbReference type="PhylomeDB" id="Q0VG49"/>
<dbReference type="TreeFam" id="TF332748"/>
<dbReference type="BioGRID-ORCS" id="69478">
    <property type="hits" value="1 hit in 76 CRISPR screens"/>
</dbReference>
<dbReference type="PRO" id="PR:Q0VG49"/>
<dbReference type="Proteomes" id="UP000000589">
    <property type="component" value="Chromosome 9"/>
</dbReference>
<dbReference type="RNAct" id="Q0VG49">
    <property type="molecule type" value="protein"/>
</dbReference>
<dbReference type="Bgee" id="ENSMUSG00000032403">
    <property type="expression patterns" value="Expressed in right kidney and 157 other cell types or tissues"/>
</dbReference>
<dbReference type="GO" id="GO:0005576">
    <property type="term" value="C:extracellular region"/>
    <property type="evidence" value="ECO:0007669"/>
    <property type="project" value="UniProtKB-SubCell"/>
</dbReference>
<dbReference type="InterPro" id="IPR029245">
    <property type="entry name" value="DUF4528"/>
</dbReference>
<dbReference type="PANTHER" id="PTHR34651">
    <property type="entry name" value="SIMILAR TO ENSANGP00000021391"/>
    <property type="match status" value="1"/>
</dbReference>
<dbReference type="PANTHER" id="PTHR34651:SF1">
    <property type="entry name" value="SIMILAR TO ENSANGP00000021391"/>
    <property type="match status" value="1"/>
</dbReference>
<dbReference type="Pfam" id="PF15031">
    <property type="entry name" value="DUF4528"/>
    <property type="match status" value="1"/>
</dbReference>
<comment type="subcellular location">
    <subcellularLocation>
        <location evidence="4">Secreted</location>
    </subcellularLocation>
</comment>
<comment type="alternative products">
    <event type="alternative splicing"/>
    <isoform>
        <id>Q0VG49-1</id>
        <name>1</name>
        <sequence type="displayed"/>
    </isoform>
    <isoform>
        <id>Q0VG49-2</id>
        <name>2</name>
        <sequence type="described" ref="VSP_038577"/>
    </isoform>
</comment>
<comment type="sequence caution" evidence="4">
    <conflict type="frameshift">
        <sequence resource="EMBL-CDS" id="BAE34504"/>
    </conflict>
</comment>